<name>RLMD_XANOR</name>
<reference key="1">
    <citation type="journal article" date="2005" name="Nucleic Acids Res.">
        <title>The genome sequence of Xanthomonas oryzae pathovar oryzae KACC10331, the bacterial blight pathogen of rice.</title>
        <authorList>
            <person name="Lee B.-M."/>
            <person name="Park Y.-J."/>
            <person name="Park D.-S."/>
            <person name="Kang H.-W."/>
            <person name="Kim J.-G."/>
            <person name="Song E.-S."/>
            <person name="Park I.-C."/>
            <person name="Yoon U.-H."/>
            <person name="Hahn J.-H."/>
            <person name="Koo B.-S."/>
            <person name="Lee G.-B."/>
            <person name="Kim H."/>
            <person name="Park H.-S."/>
            <person name="Yoon K.-O."/>
            <person name="Kim J.-H."/>
            <person name="Jung C.-H."/>
            <person name="Koh N.-H."/>
            <person name="Seo J.-S."/>
            <person name="Go S.-J."/>
        </authorList>
    </citation>
    <scope>NUCLEOTIDE SEQUENCE [LARGE SCALE GENOMIC DNA]</scope>
    <source>
        <strain>KACC10331 / KXO85</strain>
    </source>
</reference>
<organism>
    <name type="scientific">Xanthomonas oryzae pv. oryzae (strain KACC10331 / KXO85)</name>
    <dbReference type="NCBI Taxonomy" id="291331"/>
    <lineage>
        <taxon>Bacteria</taxon>
        <taxon>Pseudomonadati</taxon>
        <taxon>Pseudomonadota</taxon>
        <taxon>Gammaproteobacteria</taxon>
        <taxon>Lysobacterales</taxon>
        <taxon>Lysobacteraceae</taxon>
        <taxon>Xanthomonas</taxon>
    </lineage>
</organism>
<protein>
    <recommendedName>
        <fullName evidence="1">23S rRNA (uracil(1939)-C(5))-methyltransferase RlmD</fullName>
        <ecNumber evidence="1">2.1.1.190</ecNumber>
    </recommendedName>
    <alternativeName>
        <fullName evidence="1">23S rRNA(m5U1939)-methyltransferase</fullName>
    </alternativeName>
</protein>
<dbReference type="EC" id="2.1.1.190" evidence="1"/>
<dbReference type="EMBL" id="AE013598">
    <property type="protein sequence ID" value="AAW75113.1"/>
    <property type="status" value="ALT_INIT"/>
    <property type="molecule type" value="Genomic_DNA"/>
</dbReference>
<dbReference type="SMR" id="Q5H1Q8"/>
<dbReference type="STRING" id="291331.XOO1859"/>
<dbReference type="KEGG" id="xoo:XOO1859"/>
<dbReference type="PATRIC" id="fig|291331.8.peg.2063"/>
<dbReference type="HOGENOM" id="CLU_014689_8_2_6"/>
<dbReference type="Proteomes" id="UP000006735">
    <property type="component" value="Chromosome"/>
</dbReference>
<dbReference type="GO" id="GO:0051539">
    <property type="term" value="F:4 iron, 4 sulfur cluster binding"/>
    <property type="evidence" value="ECO:0007669"/>
    <property type="project" value="UniProtKB-KW"/>
</dbReference>
<dbReference type="GO" id="GO:0005506">
    <property type="term" value="F:iron ion binding"/>
    <property type="evidence" value="ECO:0007669"/>
    <property type="project" value="UniProtKB-UniRule"/>
</dbReference>
<dbReference type="GO" id="GO:0003723">
    <property type="term" value="F:RNA binding"/>
    <property type="evidence" value="ECO:0007669"/>
    <property type="project" value="InterPro"/>
</dbReference>
<dbReference type="GO" id="GO:0070041">
    <property type="term" value="F:rRNA (uridine-C5-)-methyltransferase activity"/>
    <property type="evidence" value="ECO:0007669"/>
    <property type="project" value="UniProtKB-UniRule"/>
</dbReference>
<dbReference type="GO" id="GO:0070475">
    <property type="term" value="P:rRNA base methylation"/>
    <property type="evidence" value="ECO:0007669"/>
    <property type="project" value="TreeGrafter"/>
</dbReference>
<dbReference type="CDD" id="cd02440">
    <property type="entry name" value="AdoMet_MTases"/>
    <property type="match status" value="1"/>
</dbReference>
<dbReference type="FunFam" id="3.40.50.150:FF:000009">
    <property type="entry name" value="23S rRNA (Uracil(1939)-C(5))-methyltransferase RlmD"/>
    <property type="match status" value="1"/>
</dbReference>
<dbReference type="FunFam" id="2.40.50.1070:FF:000006">
    <property type="entry name" value="23S rRNA (uracil(1939)-C(5))-methyltransferase RlmD"/>
    <property type="match status" value="1"/>
</dbReference>
<dbReference type="FunFam" id="2.40.50.140:FF:000097">
    <property type="entry name" value="23S rRNA (uracil(1939)-C(5))-methyltransferase RlmD"/>
    <property type="match status" value="1"/>
</dbReference>
<dbReference type="Gene3D" id="2.40.50.1070">
    <property type="match status" value="1"/>
</dbReference>
<dbReference type="Gene3D" id="2.40.50.140">
    <property type="entry name" value="Nucleic acid-binding proteins"/>
    <property type="match status" value="1"/>
</dbReference>
<dbReference type="Gene3D" id="3.40.50.150">
    <property type="entry name" value="Vaccinia Virus protein VP39"/>
    <property type="match status" value="1"/>
</dbReference>
<dbReference type="HAMAP" id="MF_01010">
    <property type="entry name" value="23SrRNA_methyltr_RlmD"/>
    <property type="match status" value="1"/>
</dbReference>
<dbReference type="InterPro" id="IPR001566">
    <property type="entry name" value="23S_rRNA_MeTrfase_RlmD"/>
</dbReference>
<dbReference type="InterPro" id="IPR030390">
    <property type="entry name" value="MeTrfase_TrmA_AS"/>
</dbReference>
<dbReference type="InterPro" id="IPR030391">
    <property type="entry name" value="MeTrfase_TrmA_CS"/>
</dbReference>
<dbReference type="InterPro" id="IPR012340">
    <property type="entry name" value="NA-bd_OB-fold"/>
</dbReference>
<dbReference type="InterPro" id="IPR029063">
    <property type="entry name" value="SAM-dependent_MTases_sf"/>
</dbReference>
<dbReference type="InterPro" id="IPR002792">
    <property type="entry name" value="TRAM_dom"/>
</dbReference>
<dbReference type="InterPro" id="IPR010280">
    <property type="entry name" value="U5_MeTrfase_fam"/>
</dbReference>
<dbReference type="NCBIfam" id="NF009639">
    <property type="entry name" value="PRK13168.1"/>
    <property type="match status" value="1"/>
</dbReference>
<dbReference type="NCBIfam" id="TIGR00479">
    <property type="entry name" value="rumA"/>
    <property type="match status" value="1"/>
</dbReference>
<dbReference type="PANTHER" id="PTHR11061:SF49">
    <property type="entry name" value="23S RRNA (URACIL(1939)-C(5))-METHYLTRANSFERASE RLMD"/>
    <property type="match status" value="1"/>
</dbReference>
<dbReference type="PANTHER" id="PTHR11061">
    <property type="entry name" value="RNA M5U METHYLTRANSFERASE"/>
    <property type="match status" value="1"/>
</dbReference>
<dbReference type="Pfam" id="PF05958">
    <property type="entry name" value="tRNA_U5-meth_tr"/>
    <property type="match status" value="1"/>
</dbReference>
<dbReference type="SUPFAM" id="SSF50249">
    <property type="entry name" value="Nucleic acid-binding proteins"/>
    <property type="match status" value="1"/>
</dbReference>
<dbReference type="SUPFAM" id="SSF53335">
    <property type="entry name" value="S-adenosyl-L-methionine-dependent methyltransferases"/>
    <property type="match status" value="1"/>
</dbReference>
<dbReference type="PROSITE" id="PS51687">
    <property type="entry name" value="SAM_MT_RNA_M5U"/>
    <property type="match status" value="1"/>
</dbReference>
<dbReference type="PROSITE" id="PS50926">
    <property type="entry name" value="TRAM"/>
    <property type="match status" value="1"/>
</dbReference>
<dbReference type="PROSITE" id="PS01230">
    <property type="entry name" value="TRMA_1"/>
    <property type="match status" value="1"/>
</dbReference>
<dbReference type="PROSITE" id="PS01231">
    <property type="entry name" value="TRMA_2"/>
    <property type="match status" value="1"/>
</dbReference>
<sequence>MARTRNRFDRTPFQTAITDLSHDGRGVARRDGEGGKVTFISGALPGELVRAEPTARSRHFDEAKTVEVLEASPQRVAPRCPHFGVCAGCVLQHLEESQQIVAKQRVLMDNLERIGHVTPQAVLPALSGDNWGYRRKGRFSVRRVEKKAKTLVGFRELDPRFVADLSVCYTVIPQIGENIPLLAALVEGMDGKRDIPQIEFIAGDDAVALTIRHMQPLSARDQQAWIAFAQEHGFAIFLQPGGVDSVHPLWPQEVPLSFRLPQWDVDLAFRPLDFIQVNASLNQKMIVHALALLDAKPDDRVLDLFCGLGNFTLPLARVVREVVGVEGDAGLVARAKDNAQRNGLDNAQFYAADLTQDQRNAAWMRQGFDKLLLDPPRSGALEVLQQLPLKTFERIVYVSCHPGSLARDAGYLVNEQGFTLVSAGAMDMFPHTAHVESIAVFERR</sequence>
<evidence type="ECO:0000255" key="1">
    <source>
        <dbReference type="HAMAP-Rule" id="MF_01010"/>
    </source>
</evidence>
<evidence type="ECO:0000305" key="2"/>
<accession>Q5H1Q8</accession>
<keyword id="KW-0004">4Fe-4S</keyword>
<keyword id="KW-0408">Iron</keyword>
<keyword id="KW-0411">Iron-sulfur</keyword>
<keyword id="KW-0479">Metal-binding</keyword>
<keyword id="KW-0489">Methyltransferase</keyword>
<keyword id="KW-1185">Reference proteome</keyword>
<keyword id="KW-0698">rRNA processing</keyword>
<keyword id="KW-0949">S-adenosyl-L-methionine</keyword>
<keyword id="KW-0808">Transferase</keyword>
<feature type="chain" id="PRO_0000229890" description="23S rRNA (uracil(1939)-C(5))-methyltransferase RlmD">
    <location>
        <begin position="1"/>
        <end position="444"/>
    </location>
</feature>
<feature type="domain" description="TRAM" evidence="1">
    <location>
        <begin position="5"/>
        <end position="67"/>
    </location>
</feature>
<feature type="active site" description="Nucleophile" evidence="1">
    <location>
        <position position="400"/>
    </location>
</feature>
<feature type="binding site" evidence="1">
    <location>
        <position position="80"/>
    </location>
    <ligand>
        <name>[4Fe-4S] cluster</name>
        <dbReference type="ChEBI" id="CHEBI:49883"/>
    </ligand>
</feature>
<feature type="binding site" evidence="1">
    <location>
        <position position="86"/>
    </location>
    <ligand>
        <name>[4Fe-4S] cluster</name>
        <dbReference type="ChEBI" id="CHEBI:49883"/>
    </ligand>
</feature>
<feature type="binding site" evidence="1">
    <location>
        <position position="89"/>
    </location>
    <ligand>
        <name>[4Fe-4S] cluster</name>
        <dbReference type="ChEBI" id="CHEBI:49883"/>
    </ligand>
</feature>
<feature type="binding site" evidence="1">
    <location>
        <position position="168"/>
    </location>
    <ligand>
        <name>[4Fe-4S] cluster</name>
        <dbReference type="ChEBI" id="CHEBI:49883"/>
    </ligand>
</feature>
<feature type="binding site" evidence="1">
    <location>
        <position position="276"/>
    </location>
    <ligand>
        <name>S-adenosyl-L-methionine</name>
        <dbReference type="ChEBI" id="CHEBI:59789"/>
    </ligand>
</feature>
<feature type="binding site" evidence="1">
    <location>
        <position position="305"/>
    </location>
    <ligand>
        <name>S-adenosyl-L-methionine</name>
        <dbReference type="ChEBI" id="CHEBI:59789"/>
    </ligand>
</feature>
<feature type="binding site" evidence="1">
    <location>
        <position position="310"/>
    </location>
    <ligand>
        <name>S-adenosyl-L-methionine</name>
        <dbReference type="ChEBI" id="CHEBI:59789"/>
    </ligand>
</feature>
<feature type="binding site" evidence="1">
    <location>
        <position position="326"/>
    </location>
    <ligand>
        <name>S-adenosyl-L-methionine</name>
        <dbReference type="ChEBI" id="CHEBI:59789"/>
    </ligand>
</feature>
<feature type="binding site" evidence="1">
    <location>
        <position position="353"/>
    </location>
    <ligand>
        <name>S-adenosyl-L-methionine</name>
        <dbReference type="ChEBI" id="CHEBI:59789"/>
    </ligand>
</feature>
<feature type="binding site" evidence="1">
    <location>
        <position position="374"/>
    </location>
    <ligand>
        <name>S-adenosyl-L-methionine</name>
        <dbReference type="ChEBI" id="CHEBI:59789"/>
    </ligand>
</feature>
<proteinExistence type="inferred from homology"/>
<comment type="function">
    <text evidence="1">Catalyzes the formation of 5-methyl-uridine at position 1939 (m5U1939) in 23S rRNA.</text>
</comment>
<comment type="catalytic activity">
    <reaction evidence="1">
        <text>uridine(1939) in 23S rRNA + S-adenosyl-L-methionine = 5-methyluridine(1939) in 23S rRNA + S-adenosyl-L-homocysteine + H(+)</text>
        <dbReference type="Rhea" id="RHEA:42908"/>
        <dbReference type="Rhea" id="RHEA-COMP:10278"/>
        <dbReference type="Rhea" id="RHEA-COMP:10279"/>
        <dbReference type="ChEBI" id="CHEBI:15378"/>
        <dbReference type="ChEBI" id="CHEBI:57856"/>
        <dbReference type="ChEBI" id="CHEBI:59789"/>
        <dbReference type="ChEBI" id="CHEBI:65315"/>
        <dbReference type="ChEBI" id="CHEBI:74447"/>
        <dbReference type="EC" id="2.1.1.190"/>
    </reaction>
</comment>
<comment type="similarity">
    <text evidence="1">Belongs to the class I-like SAM-binding methyltransferase superfamily. RNA M5U methyltransferase family. RlmD subfamily.</text>
</comment>
<comment type="sequence caution" evidence="2">
    <conflict type="erroneous initiation">
        <sequence resource="EMBL-CDS" id="AAW75113"/>
    </conflict>
</comment>
<gene>
    <name evidence="1" type="primary">rlmD</name>
    <name type="synonym">rumA</name>
    <name type="ordered locus">XOO1859</name>
</gene>